<sequence length="454" mass="53072">MEYLNDKDQHLIDKLSKKINDNNQYLGFLNTNTKELTHRYHIYPAMMIPQLAKEFIELTQQVKPEIKKLYDPFMGSGTSLVEGLAHGLEVYGTDINPLSQMMSKAKTTPIEPSKLSRAISDLEYSIREMTILYHEGNYKISNLPDFDRIDFWFKEEVIISLQLIKNCINEFIEDDLKTFFMAAFSETVRHVSNTRNNEFKLYRMAPEKLEIWNPNVTEEFLKRVYRNELGNMDFYRQLENVGNYSPKTIINKQSNIKLPEEFKDEMFDIVVTSPPYGDSKTTVAYGQFSRLSAQWLDLKIDDETKINQLDNVMLGGKTDKNIIVNDVLEYLNSPTSKSVFNLISHKDEKRALEVLQFYVDLDKSIKETTRVMKPESYQFWVVANRTVKMISIPTDIIISELFKKYNVHHLYSFYRKIPNKRMPSKNSPTNKIGNHSVTMTSEIILMLKNYINKS</sequence>
<evidence type="ECO:0000303" key="1">
    <source>
    </source>
</evidence>
<evidence type="ECO:0000303" key="2">
    <source>
    </source>
</evidence>
<evidence type="ECO:0000305" key="3"/>
<comment type="function">
    <text evidence="1">An alpha subtype methylase, recognizes the double-stranded sequence 5'-CCWGG-3', methylatES C-2 on both strands, and protects the DNA from cleavage by the MvaI endonuclease.</text>
</comment>
<comment type="catalytic activity">
    <reaction>
        <text>a 2'-deoxycytidine in DNA + S-adenosyl-L-methionine = an N(4)-methyl-2'-deoxycytidine in DNA + S-adenosyl-L-homocysteine + H(+)</text>
        <dbReference type="Rhea" id="RHEA:16857"/>
        <dbReference type="Rhea" id="RHEA-COMP:11369"/>
        <dbReference type="Rhea" id="RHEA-COMP:13674"/>
        <dbReference type="ChEBI" id="CHEBI:15378"/>
        <dbReference type="ChEBI" id="CHEBI:57856"/>
        <dbReference type="ChEBI" id="CHEBI:59789"/>
        <dbReference type="ChEBI" id="CHEBI:85452"/>
        <dbReference type="ChEBI" id="CHEBI:137933"/>
        <dbReference type="EC" id="2.1.1.113"/>
    </reaction>
</comment>
<comment type="similarity">
    <text evidence="3">Belongs to the N(4)/N(6)-methyltransferase family. N(4) subfamily.</text>
</comment>
<name>MTMV_KOCVA</name>
<accession>P14244</accession>
<feature type="chain" id="PRO_0000087929" description="Type II methyltransferase M.MvaI">
    <location>
        <begin position="1"/>
        <end position="454"/>
    </location>
</feature>
<keyword id="KW-0489">Methyltransferase</keyword>
<keyword id="KW-0680">Restriction system</keyword>
<keyword id="KW-0949">S-adenosyl-L-methionine</keyword>
<keyword id="KW-0808">Transferase</keyword>
<proteinExistence type="inferred from homology"/>
<protein>
    <recommendedName>
        <fullName evidence="1">Type II methyltransferase M.MvaI</fullName>
        <shortName evidence="2">M.MvaI</shortName>
        <ecNumber>2.1.1.113</ecNumber>
    </recommendedName>
    <alternativeName>
        <fullName>Modification methylase MvaI</fullName>
    </alternativeName>
    <alternativeName>
        <fullName>N-4 cytosine-specific methyltransferase MvaI</fullName>
    </alternativeName>
</protein>
<dbReference type="EC" id="2.1.1.113"/>
<dbReference type="EMBL" id="X16985">
    <property type="protein sequence ID" value="CAA34854.1"/>
    <property type="molecule type" value="Genomic_DNA"/>
</dbReference>
<dbReference type="PIR" id="S07539">
    <property type="entry name" value="S07539"/>
</dbReference>
<dbReference type="SMR" id="P14244"/>
<dbReference type="REBASE" id="3450">
    <property type="entry name" value="M.MvaI"/>
</dbReference>
<dbReference type="KEGG" id="ag:CAA34854"/>
<dbReference type="BRENDA" id="2.1.1.113">
    <property type="organism ID" value="3359"/>
</dbReference>
<dbReference type="PRO" id="PR:P14244"/>
<dbReference type="GO" id="GO:0003677">
    <property type="term" value="F:DNA binding"/>
    <property type="evidence" value="ECO:0007669"/>
    <property type="project" value="InterPro"/>
</dbReference>
<dbReference type="GO" id="GO:0015667">
    <property type="term" value="F:site-specific DNA-methyltransferase (cytosine-N4-specific) activity"/>
    <property type="evidence" value="ECO:0007669"/>
    <property type="project" value="UniProtKB-EC"/>
</dbReference>
<dbReference type="GO" id="GO:0009307">
    <property type="term" value="P:DNA restriction-modification system"/>
    <property type="evidence" value="ECO:0007669"/>
    <property type="project" value="UniProtKB-KW"/>
</dbReference>
<dbReference type="GO" id="GO:0032259">
    <property type="term" value="P:methylation"/>
    <property type="evidence" value="ECO:0007669"/>
    <property type="project" value="UniProtKB-KW"/>
</dbReference>
<dbReference type="Gene3D" id="3.40.50.150">
    <property type="entry name" value="Vaccinia Virus protein VP39"/>
    <property type="match status" value="2"/>
</dbReference>
<dbReference type="InterPro" id="IPR017985">
    <property type="entry name" value="MeTrfase_CN4_CS"/>
</dbReference>
<dbReference type="InterPro" id="IPR029063">
    <property type="entry name" value="SAM-dependent_MTases_sf"/>
</dbReference>
<dbReference type="SUPFAM" id="SSF53335">
    <property type="entry name" value="S-adenosyl-L-methionine-dependent methyltransferases"/>
    <property type="match status" value="2"/>
</dbReference>
<dbReference type="PROSITE" id="PS00093">
    <property type="entry name" value="N4_MTASE"/>
    <property type="match status" value="1"/>
</dbReference>
<reference key="1">
    <citation type="journal article" date="1989" name="Nucleic Acids Res.">
        <title>Sequence motifs characteristic of DNA[cytosine-N4]methyltransferases: similarity to adenine and cytosine-C5 DNA-methylases.</title>
        <authorList>
            <person name="Klimasauskas S."/>
            <person name="Timinskas A."/>
            <person name="Menkevicius S."/>
            <person name="Butkiene D."/>
            <person name="Butkus V."/>
            <person name="Janulaitis A."/>
        </authorList>
    </citation>
    <scope>NUCLEOTIDE SEQUENCE [GENOMIC DNA]</scope>
    <source>
        <strain>RFL19</strain>
    </source>
</reference>
<reference key="2">
    <citation type="journal article" date="2003" name="Nucleic Acids Res.">
        <title>A nomenclature for restriction enzymes, DNA methyltransferases, homing endonucleases and their genes.</title>
        <authorList>
            <person name="Roberts R.J."/>
            <person name="Belfort M."/>
            <person name="Bestor T."/>
            <person name="Bhagwat A.S."/>
            <person name="Bickle T.A."/>
            <person name="Bitinaite J."/>
            <person name="Blumenthal R.M."/>
            <person name="Degtyarev S.K."/>
            <person name="Dryden D.T."/>
            <person name="Dybvig K."/>
            <person name="Firman K."/>
            <person name="Gromova E.S."/>
            <person name="Gumport R.I."/>
            <person name="Halford S.E."/>
            <person name="Hattman S."/>
            <person name="Heitman J."/>
            <person name="Hornby D.P."/>
            <person name="Janulaitis A."/>
            <person name="Jeltsch A."/>
            <person name="Josephsen J."/>
            <person name="Kiss A."/>
            <person name="Klaenhammer T.R."/>
            <person name="Kobayashi I."/>
            <person name="Kong H."/>
            <person name="Krueger D.H."/>
            <person name="Lacks S."/>
            <person name="Marinus M.G."/>
            <person name="Miyahara M."/>
            <person name="Morgan R.D."/>
            <person name="Murray N.E."/>
            <person name="Nagaraja V."/>
            <person name="Piekarowicz A."/>
            <person name="Pingoud A."/>
            <person name="Raleigh E."/>
            <person name="Rao D.N."/>
            <person name="Reich N."/>
            <person name="Repin V.E."/>
            <person name="Selker E.U."/>
            <person name="Shaw P.C."/>
            <person name="Stein D.C."/>
            <person name="Stoddard B.L."/>
            <person name="Szybalski W."/>
            <person name="Trautner T.A."/>
            <person name="Van Etten J.L."/>
            <person name="Vitor J.M."/>
            <person name="Wilson G.G."/>
            <person name="Xu S.Y."/>
        </authorList>
    </citation>
    <scope>NOMENCLATURE</scope>
    <scope>SUBTYPE</scope>
</reference>
<organism>
    <name type="scientific">Kocuria varians</name>
    <name type="common">Micrococcus varians</name>
    <dbReference type="NCBI Taxonomy" id="1272"/>
    <lineage>
        <taxon>Bacteria</taxon>
        <taxon>Bacillati</taxon>
        <taxon>Actinomycetota</taxon>
        <taxon>Actinomycetes</taxon>
        <taxon>Micrococcales</taxon>
        <taxon>Micrococcaceae</taxon>
        <taxon>Kocuria</taxon>
    </lineage>
</organism>
<gene>
    <name evidence="2" type="primary">mvaIM</name>
</gene>